<geneLocation type="chloroplast"/>
<dbReference type="EC" id="7.1.1.-" evidence="1"/>
<dbReference type="EMBL" id="AF166114">
    <property type="protein sequence ID" value="AAF43840.1"/>
    <property type="molecule type" value="Genomic_DNA"/>
</dbReference>
<dbReference type="RefSeq" id="NP_038400.2">
    <property type="nucleotide sequence ID" value="NC_002186.1"/>
</dbReference>
<dbReference type="SMR" id="Q9MUR0"/>
<dbReference type="GeneID" id="800882"/>
<dbReference type="GO" id="GO:0009535">
    <property type="term" value="C:chloroplast thylakoid membrane"/>
    <property type="evidence" value="ECO:0007669"/>
    <property type="project" value="UniProtKB-SubCell"/>
</dbReference>
<dbReference type="GO" id="GO:0045271">
    <property type="term" value="C:respiratory chain complex I"/>
    <property type="evidence" value="ECO:0007669"/>
    <property type="project" value="TreeGrafter"/>
</dbReference>
<dbReference type="GO" id="GO:0051539">
    <property type="term" value="F:4 iron, 4 sulfur cluster binding"/>
    <property type="evidence" value="ECO:0007669"/>
    <property type="project" value="UniProtKB-KW"/>
</dbReference>
<dbReference type="GO" id="GO:0005506">
    <property type="term" value="F:iron ion binding"/>
    <property type="evidence" value="ECO:0007669"/>
    <property type="project" value="UniProtKB-UniRule"/>
</dbReference>
<dbReference type="GO" id="GO:0008137">
    <property type="term" value="F:NADH dehydrogenase (ubiquinone) activity"/>
    <property type="evidence" value="ECO:0007669"/>
    <property type="project" value="InterPro"/>
</dbReference>
<dbReference type="GO" id="GO:0048038">
    <property type="term" value="F:quinone binding"/>
    <property type="evidence" value="ECO:0007669"/>
    <property type="project" value="UniProtKB-KW"/>
</dbReference>
<dbReference type="GO" id="GO:0009060">
    <property type="term" value="P:aerobic respiration"/>
    <property type="evidence" value="ECO:0007669"/>
    <property type="project" value="TreeGrafter"/>
</dbReference>
<dbReference type="GO" id="GO:0015990">
    <property type="term" value="P:electron transport coupled proton transport"/>
    <property type="evidence" value="ECO:0007669"/>
    <property type="project" value="TreeGrafter"/>
</dbReference>
<dbReference type="GO" id="GO:0019684">
    <property type="term" value="P:photosynthesis, light reaction"/>
    <property type="evidence" value="ECO:0007669"/>
    <property type="project" value="UniProtKB-UniRule"/>
</dbReference>
<dbReference type="FunFam" id="3.40.50.12280:FF:000003">
    <property type="entry name" value="NAD(P)H-quinone oxidoreductase subunit K, chloroplastic"/>
    <property type="match status" value="1"/>
</dbReference>
<dbReference type="Gene3D" id="3.40.50.12280">
    <property type="match status" value="1"/>
</dbReference>
<dbReference type="HAMAP" id="MF_01356">
    <property type="entry name" value="NDH1_NuoB"/>
    <property type="match status" value="1"/>
</dbReference>
<dbReference type="InterPro" id="IPR006137">
    <property type="entry name" value="NADH_UbQ_OxRdtase-like_20kDa"/>
</dbReference>
<dbReference type="InterPro" id="IPR006138">
    <property type="entry name" value="NADH_UQ_OxRdtase_20Kd_su"/>
</dbReference>
<dbReference type="NCBIfam" id="TIGR01957">
    <property type="entry name" value="nuoB_fam"/>
    <property type="match status" value="1"/>
</dbReference>
<dbReference type="NCBIfam" id="NF005012">
    <property type="entry name" value="PRK06411.1"/>
    <property type="match status" value="1"/>
</dbReference>
<dbReference type="PANTHER" id="PTHR11995">
    <property type="entry name" value="NADH DEHYDROGENASE"/>
    <property type="match status" value="1"/>
</dbReference>
<dbReference type="PANTHER" id="PTHR11995:SF14">
    <property type="entry name" value="NADH DEHYDROGENASE [UBIQUINONE] IRON-SULFUR PROTEIN 7, MITOCHONDRIAL"/>
    <property type="match status" value="1"/>
</dbReference>
<dbReference type="Pfam" id="PF01058">
    <property type="entry name" value="Oxidored_q6"/>
    <property type="match status" value="1"/>
</dbReference>
<dbReference type="SUPFAM" id="SSF56770">
    <property type="entry name" value="HydA/Nqo6-like"/>
    <property type="match status" value="1"/>
</dbReference>
<dbReference type="PROSITE" id="PS01150">
    <property type="entry name" value="COMPLEX1_20K"/>
    <property type="match status" value="1"/>
</dbReference>
<evidence type="ECO:0000255" key="1">
    <source>
        <dbReference type="HAMAP-Rule" id="MF_01356"/>
    </source>
</evidence>
<gene>
    <name evidence="1" type="primary">ndhK</name>
</gene>
<keyword id="KW-0004">4Fe-4S</keyword>
<keyword id="KW-0150">Chloroplast</keyword>
<keyword id="KW-0408">Iron</keyword>
<keyword id="KW-0411">Iron-sulfur</keyword>
<keyword id="KW-0472">Membrane</keyword>
<keyword id="KW-0479">Metal-binding</keyword>
<keyword id="KW-0520">NAD</keyword>
<keyword id="KW-0521">NADP</keyword>
<keyword id="KW-0934">Plastid</keyword>
<keyword id="KW-0618">Plastoquinone</keyword>
<keyword id="KW-0874">Quinone</keyword>
<keyword id="KW-0793">Thylakoid</keyword>
<keyword id="KW-1278">Translocase</keyword>
<keyword id="KW-0813">Transport</keyword>
<sequence>MVIKSVGIESDKNSDTNERLINYNIEKPQVTQNVSNQLILTTLNDLYNWARLSSLWPLLYGTSCCFIEFACLLGSRFDFDRFGLVPRCSPRQADLIITAGTVTMKMAPSLVRLYEQMPEPKYVIAMGACTITGGMFSTDSYSTVRGVDKLIPVDVYLPGCPPKPEAIIDAVIKLRKKVAQENLVERGKLAQTHRYHSIKHELTLSSPVYTGKYLNSSARQTPPRSLSEATGVPVNLIFEMTKKNAIK</sequence>
<comment type="function">
    <text evidence="1">NDH shuttles electrons from NAD(P)H:plastoquinone, via FMN and iron-sulfur (Fe-S) centers, to quinones in the photosynthetic chain and possibly in a chloroplast respiratory chain. The immediate electron acceptor for the enzyme in this species is believed to be plastoquinone. Couples the redox reaction to proton translocation, and thus conserves the redox energy in a proton gradient.</text>
</comment>
<comment type="catalytic activity">
    <reaction evidence="1">
        <text>a plastoquinone + NADH + (n+1) H(+)(in) = a plastoquinol + NAD(+) + n H(+)(out)</text>
        <dbReference type="Rhea" id="RHEA:42608"/>
        <dbReference type="Rhea" id="RHEA-COMP:9561"/>
        <dbReference type="Rhea" id="RHEA-COMP:9562"/>
        <dbReference type="ChEBI" id="CHEBI:15378"/>
        <dbReference type="ChEBI" id="CHEBI:17757"/>
        <dbReference type="ChEBI" id="CHEBI:57540"/>
        <dbReference type="ChEBI" id="CHEBI:57945"/>
        <dbReference type="ChEBI" id="CHEBI:62192"/>
    </reaction>
</comment>
<comment type="catalytic activity">
    <reaction evidence="1">
        <text>a plastoquinone + NADPH + (n+1) H(+)(in) = a plastoquinol + NADP(+) + n H(+)(out)</text>
        <dbReference type="Rhea" id="RHEA:42612"/>
        <dbReference type="Rhea" id="RHEA-COMP:9561"/>
        <dbReference type="Rhea" id="RHEA-COMP:9562"/>
        <dbReference type="ChEBI" id="CHEBI:15378"/>
        <dbReference type="ChEBI" id="CHEBI:17757"/>
        <dbReference type="ChEBI" id="CHEBI:57783"/>
        <dbReference type="ChEBI" id="CHEBI:58349"/>
        <dbReference type="ChEBI" id="CHEBI:62192"/>
    </reaction>
</comment>
<comment type="cofactor">
    <cofactor evidence="1">
        <name>[4Fe-4S] cluster</name>
        <dbReference type="ChEBI" id="CHEBI:49883"/>
    </cofactor>
    <text evidence="1">Binds 1 [4Fe-4S] cluster.</text>
</comment>
<comment type="subunit">
    <text evidence="1">NDH is composed of at least 16 different subunits, 5 of which are encoded in the nucleus.</text>
</comment>
<comment type="subcellular location">
    <subcellularLocation>
        <location evidence="1">Plastid</location>
        <location evidence="1">Chloroplast thylakoid membrane</location>
        <topology evidence="1">Peripheral membrane protein</topology>
        <orientation evidence="1">Stromal side</orientation>
    </subcellularLocation>
</comment>
<comment type="similarity">
    <text evidence="1">Belongs to the complex I 20 kDa subunit family.</text>
</comment>
<feature type="chain" id="PRO_0000118748" description="NAD(P)H-quinone oxidoreductase subunit K, chloroplastic">
    <location>
        <begin position="1"/>
        <end position="247"/>
    </location>
</feature>
<feature type="binding site" evidence="1">
    <location>
        <position position="64"/>
    </location>
    <ligand>
        <name>[4Fe-4S] cluster</name>
        <dbReference type="ChEBI" id="CHEBI:49883"/>
    </ligand>
</feature>
<feature type="binding site" evidence="1">
    <location>
        <position position="65"/>
    </location>
    <ligand>
        <name>[4Fe-4S] cluster</name>
        <dbReference type="ChEBI" id="CHEBI:49883"/>
    </ligand>
</feature>
<feature type="binding site" evidence="1">
    <location>
        <position position="129"/>
    </location>
    <ligand>
        <name>[4Fe-4S] cluster</name>
        <dbReference type="ChEBI" id="CHEBI:49883"/>
    </ligand>
</feature>
<feature type="binding site" evidence="1">
    <location>
        <position position="160"/>
    </location>
    <ligand>
        <name>[4Fe-4S] cluster</name>
        <dbReference type="ChEBI" id="CHEBI:49883"/>
    </ligand>
</feature>
<name>NDHK_MESVI</name>
<accession>Q9MUR0</accession>
<organism>
    <name type="scientific">Mesostigma viride</name>
    <name type="common">Green alga</name>
    <dbReference type="NCBI Taxonomy" id="41882"/>
    <lineage>
        <taxon>Eukaryota</taxon>
        <taxon>Viridiplantae</taxon>
        <taxon>Streptophyta</taxon>
        <taxon>Mesostigmatophyceae</taxon>
        <taxon>Mesostigmatales</taxon>
        <taxon>Mesostigmataceae</taxon>
        <taxon>Mesostigma</taxon>
    </lineage>
</organism>
<protein>
    <recommendedName>
        <fullName evidence="1">NAD(P)H-quinone oxidoreductase subunit K, chloroplastic</fullName>
        <ecNumber evidence="1">7.1.1.-</ecNumber>
    </recommendedName>
    <alternativeName>
        <fullName evidence="1">NAD(P)H dehydrogenase subunit K</fullName>
    </alternativeName>
    <alternativeName>
        <fullName evidence="1">NADH-plastoquinone oxidoreductase subunit K</fullName>
    </alternativeName>
</protein>
<reference key="1">
    <citation type="journal article" date="2000" name="Nature">
        <title>Ancestral chloroplast genome in Mesostigma viride reveals an early branch of green plant evolution.</title>
        <authorList>
            <person name="Lemieux C."/>
            <person name="Otis C."/>
            <person name="Turmel M."/>
        </authorList>
    </citation>
    <scope>NUCLEOTIDE SEQUENCE [LARGE SCALE GENOMIC DNA]</scope>
    <source>
        <strain>NIES-296 / KY-14 / CCMP 2046</strain>
    </source>
</reference>
<proteinExistence type="inferred from homology"/>